<proteinExistence type="inferred from homology"/>
<keyword id="KW-0963">Cytoplasm</keyword>
<keyword id="KW-0369">Histidine metabolism</keyword>
<keyword id="KW-0378">Hydrolase</keyword>
<keyword id="KW-0408">Iron</keyword>
<keyword id="KW-0479">Metal-binding</keyword>
<keyword id="KW-1185">Reference proteome</keyword>
<keyword id="KW-0862">Zinc</keyword>
<accession>Q5WCP8</accession>
<name>HUTI_SHOC1</name>
<comment type="function">
    <text evidence="1">Catalyzes the hydrolytic cleavage of the carbon-nitrogen bond in imidazolone-5-propanoate to yield N-formimidoyl-L-glutamate. It is the third step in the universal histidine degradation pathway.</text>
</comment>
<comment type="catalytic activity">
    <reaction evidence="1">
        <text>4-imidazolone-5-propanoate + H2O = N-formimidoyl-L-glutamate</text>
        <dbReference type="Rhea" id="RHEA:23660"/>
        <dbReference type="ChEBI" id="CHEBI:15377"/>
        <dbReference type="ChEBI" id="CHEBI:58928"/>
        <dbReference type="ChEBI" id="CHEBI:77893"/>
        <dbReference type="EC" id="3.5.2.7"/>
    </reaction>
</comment>
<comment type="cofactor">
    <cofactor evidence="1">
        <name>Zn(2+)</name>
        <dbReference type="ChEBI" id="CHEBI:29105"/>
    </cofactor>
    <cofactor evidence="1">
        <name>Fe(3+)</name>
        <dbReference type="ChEBI" id="CHEBI:29034"/>
    </cofactor>
    <text evidence="1">Binds 1 zinc or iron ion per subunit.</text>
</comment>
<comment type="pathway">
    <text evidence="1">Amino-acid degradation; L-histidine degradation into L-glutamate; N-formimidoyl-L-glutamate from L-histidine: step 3/3.</text>
</comment>
<comment type="subcellular location">
    <subcellularLocation>
        <location evidence="1">Cytoplasm</location>
    </subcellularLocation>
</comment>
<comment type="similarity">
    <text evidence="1">Belongs to the metallo-dependent hydrolases superfamily. HutI family.</text>
</comment>
<gene>
    <name evidence="1" type="primary">hutI</name>
    <name type="ordered locus">ABC3329</name>
</gene>
<protein>
    <recommendedName>
        <fullName evidence="1">Imidazolonepropionase</fullName>
        <ecNumber evidence="1">3.5.2.7</ecNumber>
    </recommendedName>
    <alternativeName>
        <fullName evidence="1">Imidazolone-5-propionate hydrolase</fullName>
    </alternativeName>
</protein>
<dbReference type="EC" id="3.5.2.7" evidence="1"/>
<dbReference type="EMBL" id="AP006627">
    <property type="protein sequence ID" value="BAD65862.1"/>
    <property type="molecule type" value="Genomic_DNA"/>
</dbReference>
<dbReference type="RefSeq" id="WP_011248168.1">
    <property type="nucleotide sequence ID" value="NC_006582.1"/>
</dbReference>
<dbReference type="SMR" id="Q5WCP8"/>
<dbReference type="STRING" id="66692.ABC3329"/>
<dbReference type="KEGG" id="bcl:ABC3329"/>
<dbReference type="eggNOG" id="COG1228">
    <property type="taxonomic scope" value="Bacteria"/>
</dbReference>
<dbReference type="HOGENOM" id="CLU_041647_0_1_9"/>
<dbReference type="OrthoDB" id="9776455at2"/>
<dbReference type="UniPathway" id="UPA00379">
    <property type="reaction ID" value="UER00551"/>
</dbReference>
<dbReference type="Proteomes" id="UP000001168">
    <property type="component" value="Chromosome"/>
</dbReference>
<dbReference type="GO" id="GO:0005737">
    <property type="term" value="C:cytoplasm"/>
    <property type="evidence" value="ECO:0007669"/>
    <property type="project" value="UniProtKB-SubCell"/>
</dbReference>
<dbReference type="GO" id="GO:0050480">
    <property type="term" value="F:imidazolonepropionase activity"/>
    <property type="evidence" value="ECO:0007669"/>
    <property type="project" value="UniProtKB-UniRule"/>
</dbReference>
<dbReference type="GO" id="GO:0005506">
    <property type="term" value="F:iron ion binding"/>
    <property type="evidence" value="ECO:0007669"/>
    <property type="project" value="UniProtKB-UniRule"/>
</dbReference>
<dbReference type="GO" id="GO:0008270">
    <property type="term" value="F:zinc ion binding"/>
    <property type="evidence" value="ECO:0007669"/>
    <property type="project" value="UniProtKB-UniRule"/>
</dbReference>
<dbReference type="GO" id="GO:0019556">
    <property type="term" value="P:L-histidine catabolic process to glutamate and formamide"/>
    <property type="evidence" value="ECO:0007669"/>
    <property type="project" value="UniProtKB-UniPathway"/>
</dbReference>
<dbReference type="GO" id="GO:0019557">
    <property type="term" value="P:L-histidine catabolic process to glutamate and formate"/>
    <property type="evidence" value="ECO:0007669"/>
    <property type="project" value="UniProtKB-UniPathway"/>
</dbReference>
<dbReference type="CDD" id="cd01296">
    <property type="entry name" value="Imidazolone-5PH"/>
    <property type="match status" value="1"/>
</dbReference>
<dbReference type="FunFam" id="3.20.20.140:FF:000007">
    <property type="entry name" value="Imidazolonepropionase"/>
    <property type="match status" value="1"/>
</dbReference>
<dbReference type="Gene3D" id="3.20.20.140">
    <property type="entry name" value="Metal-dependent hydrolases"/>
    <property type="match status" value="1"/>
</dbReference>
<dbReference type="Gene3D" id="2.30.40.10">
    <property type="entry name" value="Urease, subunit C, domain 1"/>
    <property type="match status" value="1"/>
</dbReference>
<dbReference type="HAMAP" id="MF_00372">
    <property type="entry name" value="HutI"/>
    <property type="match status" value="1"/>
</dbReference>
<dbReference type="InterPro" id="IPR006680">
    <property type="entry name" value="Amidohydro-rel"/>
</dbReference>
<dbReference type="InterPro" id="IPR005920">
    <property type="entry name" value="HutI"/>
</dbReference>
<dbReference type="InterPro" id="IPR011059">
    <property type="entry name" value="Metal-dep_hydrolase_composite"/>
</dbReference>
<dbReference type="InterPro" id="IPR032466">
    <property type="entry name" value="Metal_Hydrolase"/>
</dbReference>
<dbReference type="NCBIfam" id="TIGR01224">
    <property type="entry name" value="hutI"/>
    <property type="match status" value="1"/>
</dbReference>
<dbReference type="PANTHER" id="PTHR42752">
    <property type="entry name" value="IMIDAZOLONEPROPIONASE"/>
    <property type="match status" value="1"/>
</dbReference>
<dbReference type="PANTHER" id="PTHR42752:SF1">
    <property type="entry name" value="IMIDAZOLONEPROPIONASE-RELATED"/>
    <property type="match status" value="1"/>
</dbReference>
<dbReference type="Pfam" id="PF01979">
    <property type="entry name" value="Amidohydro_1"/>
    <property type="match status" value="1"/>
</dbReference>
<dbReference type="SUPFAM" id="SSF51338">
    <property type="entry name" value="Composite domain of metallo-dependent hydrolases"/>
    <property type="match status" value="1"/>
</dbReference>
<dbReference type="SUPFAM" id="SSF51556">
    <property type="entry name" value="Metallo-dependent hydrolases"/>
    <property type="match status" value="1"/>
</dbReference>
<organism>
    <name type="scientific">Shouchella clausii (strain KSM-K16)</name>
    <name type="common">Alkalihalobacillus clausii</name>
    <dbReference type="NCBI Taxonomy" id="66692"/>
    <lineage>
        <taxon>Bacteria</taxon>
        <taxon>Bacillati</taxon>
        <taxon>Bacillota</taxon>
        <taxon>Bacilli</taxon>
        <taxon>Bacillales</taxon>
        <taxon>Bacillaceae</taxon>
        <taxon>Shouchella</taxon>
    </lineage>
</organism>
<reference key="1">
    <citation type="submission" date="2003-10" db="EMBL/GenBank/DDBJ databases">
        <title>The complete genome sequence of the alkaliphilic Bacillus clausii KSM-K16.</title>
        <authorList>
            <person name="Takaki Y."/>
            <person name="Kageyama Y."/>
            <person name="Shimamura S."/>
            <person name="Suzuki H."/>
            <person name="Nishi S."/>
            <person name="Hatada Y."/>
            <person name="Kawai S."/>
            <person name="Ito S."/>
            <person name="Horikoshi K."/>
        </authorList>
    </citation>
    <scope>NUCLEOTIDE SEQUENCE [LARGE SCALE GENOMIC DNA]</scope>
    <source>
        <strain>KSM-K16</strain>
    </source>
</reference>
<feature type="chain" id="PRO_0000306432" description="Imidazolonepropionase">
    <location>
        <begin position="1"/>
        <end position="447"/>
    </location>
</feature>
<feature type="binding site" evidence="1">
    <location>
        <position position="85"/>
    </location>
    <ligand>
        <name>Fe(3+)</name>
        <dbReference type="ChEBI" id="CHEBI:29034"/>
    </ligand>
</feature>
<feature type="binding site" evidence="1">
    <location>
        <position position="85"/>
    </location>
    <ligand>
        <name>Zn(2+)</name>
        <dbReference type="ChEBI" id="CHEBI:29105"/>
    </ligand>
</feature>
<feature type="binding site" evidence="1">
    <location>
        <position position="87"/>
    </location>
    <ligand>
        <name>Fe(3+)</name>
        <dbReference type="ChEBI" id="CHEBI:29034"/>
    </ligand>
</feature>
<feature type="binding site" evidence="1">
    <location>
        <position position="87"/>
    </location>
    <ligand>
        <name>Zn(2+)</name>
        <dbReference type="ChEBI" id="CHEBI:29105"/>
    </ligand>
</feature>
<feature type="binding site" evidence="1">
    <location>
        <position position="94"/>
    </location>
    <ligand>
        <name>4-imidazolone-5-propanoate</name>
        <dbReference type="ChEBI" id="CHEBI:77893"/>
    </ligand>
</feature>
<feature type="binding site" evidence="1">
    <location>
        <position position="157"/>
    </location>
    <ligand>
        <name>4-imidazolone-5-propanoate</name>
        <dbReference type="ChEBI" id="CHEBI:77893"/>
    </ligand>
</feature>
<feature type="binding site" evidence="1">
    <location>
        <position position="157"/>
    </location>
    <ligand>
        <name>N-formimidoyl-L-glutamate</name>
        <dbReference type="ChEBI" id="CHEBI:58928"/>
    </ligand>
</feature>
<feature type="binding site" evidence="1">
    <location>
        <position position="190"/>
    </location>
    <ligand>
        <name>4-imidazolone-5-propanoate</name>
        <dbReference type="ChEBI" id="CHEBI:77893"/>
    </ligand>
</feature>
<feature type="binding site" evidence="1">
    <location>
        <position position="255"/>
    </location>
    <ligand>
        <name>Fe(3+)</name>
        <dbReference type="ChEBI" id="CHEBI:29034"/>
    </ligand>
</feature>
<feature type="binding site" evidence="1">
    <location>
        <position position="255"/>
    </location>
    <ligand>
        <name>Zn(2+)</name>
        <dbReference type="ChEBI" id="CHEBI:29105"/>
    </ligand>
</feature>
<feature type="binding site" evidence="1">
    <location>
        <position position="258"/>
    </location>
    <ligand>
        <name>4-imidazolone-5-propanoate</name>
        <dbReference type="ChEBI" id="CHEBI:77893"/>
    </ligand>
</feature>
<feature type="binding site" evidence="1">
    <location>
        <position position="329"/>
    </location>
    <ligand>
        <name>Fe(3+)</name>
        <dbReference type="ChEBI" id="CHEBI:29034"/>
    </ligand>
</feature>
<feature type="binding site" evidence="1">
    <location>
        <position position="329"/>
    </location>
    <ligand>
        <name>Zn(2+)</name>
        <dbReference type="ChEBI" id="CHEBI:29105"/>
    </ligand>
</feature>
<feature type="binding site" evidence="1">
    <location>
        <position position="331"/>
    </location>
    <ligand>
        <name>N-formimidoyl-L-glutamate</name>
        <dbReference type="ChEBI" id="CHEBI:58928"/>
    </ligand>
</feature>
<feature type="binding site" evidence="1">
    <location>
        <position position="333"/>
    </location>
    <ligand>
        <name>N-formimidoyl-L-glutamate</name>
        <dbReference type="ChEBI" id="CHEBI:58928"/>
    </ligand>
</feature>
<feature type="binding site" evidence="1">
    <location>
        <position position="334"/>
    </location>
    <ligand>
        <name>4-imidazolone-5-propanoate</name>
        <dbReference type="ChEBI" id="CHEBI:77893"/>
    </ligand>
</feature>
<evidence type="ECO:0000255" key="1">
    <source>
        <dbReference type="HAMAP-Rule" id="MF_00372"/>
    </source>
</evidence>
<sequence length="447" mass="47914">MAELLYLKEAEQVVTVAGASDKPKVGEDLSEIGVIERGSVIVEGEKIAFAGTDADARHYLQKRSGKVKTIEATGKILTPGLVDPHTHLVFAGSREQELTMRLKGKSYMSILQAGGGILSTTKSTRAATADQLAHESRLRLDRFLQHGVTTVEAKSGYGLATDAELKQLRVAQQLNNDHPVDVVSTFMGAHAIPPEWKQDPNGFVQLVAEEMIPQVAAENLAEFCDVFCEEGVFTVAQSQYILEEGKKHGLKPKIHADELVSFGGAELAAKVGAVSADHLLKASPTGIEQMAEAGVIAVLLPGTAFFLMTEPANARAMIEAGVPVALSTDRNPGSSPTESLPFIMNLACLTMKMTPEEVLAASTINAAHAIGRAKDIGSIEAGKNADLVLFDAPNYQTLQYNYAVNRVDTVMKAGKIVVEGGVLLEKTDNQRCSLATEDRGTRPIWQK</sequence>